<name>RS17_PSEPG</name>
<accession>B0KK76</accession>
<keyword id="KW-0687">Ribonucleoprotein</keyword>
<keyword id="KW-0689">Ribosomal protein</keyword>
<keyword id="KW-0694">RNA-binding</keyword>
<keyword id="KW-0699">rRNA-binding</keyword>
<feature type="chain" id="PRO_1000086849" description="Small ribosomal subunit protein uS17">
    <location>
        <begin position="1"/>
        <end position="88"/>
    </location>
</feature>
<gene>
    <name evidence="1" type="primary">rpsQ</name>
    <name type="ordered locus">PputGB1_0493</name>
</gene>
<organism>
    <name type="scientific">Pseudomonas putida (strain GB-1)</name>
    <dbReference type="NCBI Taxonomy" id="76869"/>
    <lineage>
        <taxon>Bacteria</taxon>
        <taxon>Pseudomonadati</taxon>
        <taxon>Pseudomonadota</taxon>
        <taxon>Gammaproteobacteria</taxon>
        <taxon>Pseudomonadales</taxon>
        <taxon>Pseudomonadaceae</taxon>
        <taxon>Pseudomonas</taxon>
    </lineage>
</organism>
<evidence type="ECO:0000255" key="1">
    <source>
        <dbReference type="HAMAP-Rule" id="MF_01345"/>
    </source>
</evidence>
<evidence type="ECO:0000305" key="2"/>
<dbReference type="EMBL" id="CP000926">
    <property type="protein sequence ID" value="ABY96404.1"/>
    <property type="molecule type" value="Genomic_DNA"/>
</dbReference>
<dbReference type="RefSeq" id="WP_008089812.1">
    <property type="nucleotide sequence ID" value="NC_010322.1"/>
</dbReference>
<dbReference type="SMR" id="B0KK76"/>
<dbReference type="GeneID" id="49614407"/>
<dbReference type="KEGG" id="ppg:PputGB1_0493"/>
<dbReference type="eggNOG" id="COG0186">
    <property type="taxonomic scope" value="Bacteria"/>
</dbReference>
<dbReference type="HOGENOM" id="CLU_073626_1_1_6"/>
<dbReference type="Proteomes" id="UP000002157">
    <property type="component" value="Chromosome"/>
</dbReference>
<dbReference type="GO" id="GO:0022627">
    <property type="term" value="C:cytosolic small ribosomal subunit"/>
    <property type="evidence" value="ECO:0007669"/>
    <property type="project" value="TreeGrafter"/>
</dbReference>
<dbReference type="GO" id="GO:0019843">
    <property type="term" value="F:rRNA binding"/>
    <property type="evidence" value="ECO:0007669"/>
    <property type="project" value="UniProtKB-UniRule"/>
</dbReference>
<dbReference type="GO" id="GO:0003735">
    <property type="term" value="F:structural constituent of ribosome"/>
    <property type="evidence" value="ECO:0007669"/>
    <property type="project" value="InterPro"/>
</dbReference>
<dbReference type="GO" id="GO:0006412">
    <property type="term" value="P:translation"/>
    <property type="evidence" value="ECO:0007669"/>
    <property type="project" value="UniProtKB-UniRule"/>
</dbReference>
<dbReference type="CDD" id="cd00364">
    <property type="entry name" value="Ribosomal_uS17"/>
    <property type="match status" value="1"/>
</dbReference>
<dbReference type="FunFam" id="2.40.50.140:FF:000014">
    <property type="entry name" value="30S ribosomal protein S17"/>
    <property type="match status" value="1"/>
</dbReference>
<dbReference type="Gene3D" id="2.40.50.140">
    <property type="entry name" value="Nucleic acid-binding proteins"/>
    <property type="match status" value="1"/>
</dbReference>
<dbReference type="HAMAP" id="MF_01345_B">
    <property type="entry name" value="Ribosomal_uS17_B"/>
    <property type="match status" value="1"/>
</dbReference>
<dbReference type="InterPro" id="IPR012340">
    <property type="entry name" value="NA-bd_OB-fold"/>
</dbReference>
<dbReference type="InterPro" id="IPR000266">
    <property type="entry name" value="Ribosomal_uS17"/>
</dbReference>
<dbReference type="InterPro" id="IPR019984">
    <property type="entry name" value="Ribosomal_uS17_bact/chlr"/>
</dbReference>
<dbReference type="NCBIfam" id="NF004123">
    <property type="entry name" value="PRK05610.1"/>
    <property type="match status" value="1"/>
</dbReference>
<dbReference type="NCBIfam" id="TIGR03635">
    <property type="entry name" value="uS17_bact"/>
    <property type="match status" value="1"/>
</dbReference>
<dbReference type="PANTHER" id="PTHR10744">
    <property type="entry name" value="40S RIBOSOMAL PROTEIN S11 FAMILY MEMBER"/>
    <property type="match status" value="1"/>
</dbReference>
<dbReference type="PANTHER" id="PTHR10744:SF1">
    <property type="entry name" value="SMALL RIBOSOMAL SUBUNIT PROTEIN US17M"/>
    <property type="match status" value="1"/>
</dbReference>
<dbReference type="Pfam" id="PF00366">
    <property type="entry name" value="Ribosomal_S17"/>
    <property type="match status" value="1"/>
</dbReference>
<dbReference type="PRINTS" id="PR00973">
    <property type="entry name" value="RIBOSOMALS17"/>
</dbReference>
<dbReference type="SUPFAM" id="SSF50249">
    <property type="entry name" value="Nucleic acid-binding proteins"/>
    <property type="match status" value="1"/>
</dbReference>
<proteinExistence type="inferred from homology"/>
<reference key="1">
    <citation type="submission" date="2008-01" db="EMBL/GenBank/DDBJ databases">
        <title>Complete sequence of Pseudomonas putida GB-1.</title>
        <authorList>
            <consortium name="US DOE Joint Genome Institute"/>
            <person name="Copeland A."/>
            <person name="Lucas S."/>
            <person name="Lapidus A."/>
            <person name="Barry K."/>
            <person name="Glavina del Rio T."/>
            <person name="Dalin E."/>
            <person name="Tice H."/>
            <person name="Pitluck S."/>
            <person name="Bruce D."/>
            <person name="Goodwin L."/>
            <person name="Chertkov O."/>
            <person name="Brettin T."/>
            <person name="Detter J.C."/>
            <person name="Han C."/>
            <person name="Kuske C.R."/>
            <person name="Schmutz J."/>
            <person name="Larimer F."/>
            <person name="Land M."/>
            <person name="Hauser L."/>
            <person name="Kyrpides N."/>
            <person name="Kim E."/>
            <person name="McCarthy J.K."/>
            <person name="Richardson P."/>
        </authorList>
    </citation>
    <scope>NUCLEOTIDE SEQUENCE [LARGE SCALE GENOMIC DNA]</scope>
    <source>
        <strain>GB-1</strain>
    </source>
</reference>
<protein>
    <recommendedName>
        <fullName evidence="1">Small ribosomal subunit protein uS17</fullName>
    </recommendedName>
    <alternativeName>
        <fullName evidence="2">30S ribosomal protein S17</fullName>
    </alternativeName>
</protein>
<sequence length="88" mass="10074">MAEAEKTVRTLTGRVVSDKMDKTITVLIERRVKHPIYGKYVKRSTKLHAHDESNQCKIGDKVSIRETRPLAKTKSWALVEVLERAVEV</sequence>
<comment type="function">
    <text evidence="1">One of the primary rRNA binding proteins, it binds specifically to the 5'-end of 16S ribosomal RNA.</text>
</comment>
<comment type="subunit">
    <text evidence="1">Part of the 30S ribosomal subunit.</text>
</comment>
<comment type="similarity">
    <text evidence="1">Belongs to the universal ribosomal protein uS17 family.</text>
</comment>